<accession>Q1QEM4</accession>
<sequence>MWGGRFSEATDSFVAAFTASVGFDQRFARHDIQGSIAHATMLRECGILEADDVATIIDGLHQVLREIEAGEFNWSIALEDVHMNVESRLTDIVGAVGKKLHTGRSRNDQVATDIRLWLREETDNIIALLVRLQSGLLDLAEQHTDTIMPGFTHLQTAQPVSFGHHVMAWFEMLYRDTERLVDARRRINQMPLGSAALAGTTFPIDRTITAELLGFEGICQNSLDAVSDRDFAIEFTSAASILMMHMSRMSEEIILWMSAQFNFVQIPDRFCTGSSIMPQKKNPDVPELVRGKAARVFGQLMTLLSLMKSQPLAYNKDNQEDKEPLFDCVDTLTGSLLAFADMLPNITPNKENMRAATMKGYATATDLADYLVRRGVAFRDAHEVVGNAVALGIAEGVDLSDLSLAQLQQFSDAIGEDVFEYLTLEGSLAARDHLGGTAPNQVKQAVSRGRTRLELFA</sequence>
<gene>
    <name evidence="1" type="primary">argH</name>
    <name type="ordered locus">Pcryo_0095</name>
</gene>
<dbReference type="EC" id="4.3.2.1" evidence="1"/>
<dbReference type="EMBL" id="CP000323">
    <property type="protein sequence ID" value="ABE73879.1"/>
    <property type="molecule type" value="Genomic_DNA"/>
</dbReference>
<dbReference type="RefSeq" id="WP_011512470.1">
    <property type="nucleotide sequence ID" value="NC_007969.1"/>
</dbReference>
<dbReference type="SMR" id="Q1QEM4"/>
<dbReference type="STRING" id="335284.Pcryo_0095"/>
<dbReference type="KEGG" id="pcr:Pcryo_0095"/>
<dbReference type="eggNOG" id="COG0165">
    <property type="taxonomic scope" value="Bacteria"/>
</dbReference>
<dbReference type="HOGENOM" id="CLU_027272_2_3_6"/>
<dbReference type="UniPathway" id="UPA00068">
    <property type="reaction ID" value="UER00114"/>
</dbReference>
<dbReference type="Proteomes" id="UP000002425">
    <property type="component" value="Chromosome"/>
</dbReference>
<dbReference type="GO" id="GO:0005829">
    <property type="term" value="C:cytosol"/>
    <property type="evidence" value="ECO:0007669"/>
    <property type="project" value="TreeGrafter"/>
</dbReference>
<dbReference type="GO" id="GO:0004056">
    <property type="term" value="F:argininosuccinate lyase activity"/>
    <property type="evidence" value="ECO:0007669"/>
    <property type="project" value="UniProtKB-UniRule"/>
</dbReference>
<dbReference type="GO" id="GO:0042450">
    <property type="term" value="P:arginine biosynthetic process via ornithine"/>
    <property type="evidence" value="ECO:0007669"/>
    <property type="project" value="InterPro"/>
</dbReference>
<dbReference type="GO" id="GO:0006526">
    <property type="term" value="P:L-arginine biosynthetic process"/>
    <property type="evidence" value="ECO:0007669"/>
    <property type="project" value="UniProtKB-UniRule"/>
</dbReference>
<dbReference type="CDD" id="cd01359">
    <property type="entry name" value="Argininosuccinate_lyase"/>
    <property type="match status" value="1"/>
</dbReference>
<dbReference type="FunFam" id="1.10.275.10:FF:000002">
    <property type="entry name" value="Argininosuccinate lyase"/>
    <property type="match status" value="1"/>
</dbReference>
<dbReference type="FunFam" id="1.10.40.30:FF:000001">
    <property type="entry name" value="Argininosuccinate lyase"/>
    <property type="match status" value="1"/>
</dbReference>
<dbReference type="FunFam" id="1.20.200.10:FF:000015">
    <property type="entry name" value="argininosuccinate lyase isoform X2"/>
    <property type="match status" value="1"/>
</dbReference>
<dbReference type="Gene3D" id="1.10.40.30">
    <property type="entry name" value="Fumarase/aspartase (C-terminal domain)"/>
    <property type="match status" value="1"/>
</dbReference>
<dbReference type="Gene3D" id="1.20.200.10">
    <property type="entry name" value="Fumarase/aspartase (Central domain)"/>
    <property type="match status" value="1"/>
</dbReference>
<dbReference type="Gene3D" id="1.10.275.10">
    <property type="entry name" value="Fumarase/aspartase (N-terminal domain)"/>
    <property type="match status" value="1"/>
</dbReference>
<dbReference type="HAMAP" id="MF_00006">
    <property type="entry name" value="Arg_succ_lyase"/>
    <property type="match status" value="1"/>
</dbReference>
<dbReference type="InterPro" id="IPR029419">
    <property type="entry name" value="Arg_succ_lyase_C"/>
</dbReference>
<dbReference type="InterPro" id="IPR009049">
    <property type="entry name" value="Argininosuccinate_lyase"/>
</dbReference>
<dbReference type="InterPro" id="IPR024083">
    <property type="entry name" value="Fumarase/histidase_N"/>
</dbReference>
<dbReference type="InterPro" id="IPR020557">
    <property type="entry name" value="Fumarate_lyase_CS"/>
</dbReference>
<dbReference type="InterPro" id="IPR000362">
    <property type="entry name" value="Fumarate_lyase_fam"/>
</dbReference>
<dbReference type="InterPro" id="IPR022761">
    <property type="entry name" value="Fumarate_lyase_N"/>
</dbReference>
<dbReference type="InterPro" id="IPR008948">
    <property type="entry name" value="L-Aspartase-like"/>
</dbReference>
<dbReference type="NCBIfam" id="TIGR00838">
    <property type="entry name" value="argH"/>
    <property type="match status" value="1"/>
</dbReference>
<dbReference type="PANTHER" id="PTHR43814">
    <property type="entry name" value="ARGININOSUCCINATE LYASE"/>
    <property type="match status" value="1"/>
</dbReference>
<dbReference type="PANTHER" id="PTHR43814:SF1">
    <property type="entry name" value="ARGININOSUCCINATE LYASE"/>
    <property type="match status" value="1"/>
</dbReference>
<dbReference type="Pfam" id="PF14698">
    <property type="entry name" value="ASL_C2"/>
    <property type="match status" value="1"/>
</dbReference>
<dbReference type="Pfam" id="PF00206">
    <property type="entry name" value="Lyase_1"/>
    <property type="match status" value="1"/>
</dbReference>
<dbReference type="PRINTS" id="PR00145">
    <property type="entry name" value="ARGSUCLYASE"/>
</dbReference>
<dbReference type="PRINTS" id="PR00149">
    <property type="entry name" value="FUMRATELYASE"/>
</dbReference>
<dbReference type="SUPFAM" id="SSF48557">
    <property type="entry name" value="L-aspartase-like"/>
    <property type="match status" value="1"/>
</dbReference>
<dbReference type="PROSITE" id="PS00163">
    <property type="entry name" value="FUMARATE_LYASES"/>
    <property type="match status" value="1"/>
</dbReference>
<proteinExistence type="inferred from homology"/>
<reference key="1">
    <citation type="submission" date="2006-03" db="EMBL/GenBank/DDBJ databases">
        <title>Complete sequence of chromosome of Psychrobacter cryohalolentis K5.</title>
        <authorList>
            <consortium name="US DOE Joint Genome Institute"/>
            <person name="Copeland A."/>
            <person name="Lucas S."/>
            <person name="Lapidus A."/>
            <person name="Barry K."/>
            <person name="Detter J.C."/>
            <person name="Glavina T."/>
            <person name="Hammon N."/>
            <person name="Israni S."/>
            <person name="Dalin E."/>
            <person name="Tice H."/>
            <person name="Pitluck S."/>
            <person name="Brettin T."/>
            <person name="Bruce D."/>
            <person name="Han C."/>
            <person name="Tapia R."/>
            <person name="Sims D.R."/>
            <person name="Gilna P."/>
            <person name="Schmutz J."/>
            <person name="Larimer F."/>
            <person name="Land M."/>
            <person name="Hauser L."/>
            <person name="Kyrpides N."/>
            <person name="Kim E."/>
            <person name="Richardson P."/>
        </authorList>
    </citation>
    <scope>NUCLEOTIDE SEQUENCE [LARGE SCALE GENOMIC DNA]</scope>
    <source>
        <strain>ATCC BAA-1226 / DSM 17306 / VKM B-2378 / K5</strain>
    </source>
</reference>
<keyword id="KW-0028">Amino-acid biosynthesis</keyword>
<keyword id="KW-0055">Arginine biosynthesis</keyword>
<keyword id="KW-0963">Cytoplasm</keyword>
<keyword id="KW-0456">Lyase</keyword>
<evidence type="ECO:0000255" key="1">
    <source>
        <dbReference type="HAMAP-Rule" id="MF_00006"/>
    </source>
</evidence>
<organism>
    <name type="scientific">Psychrobacter cryohalolentis (strain ATCC BAA-1226 / DSM 17306 / VKM B-2378 / K5)</name>
    <dbReference type="NCBI Taxonomy" id="335284"/>
    <lineage>
        <taxon>Bacteria</taxon>
        <taxon>Pseudomonadati</taxon>
        <taxon>Pseudomonadota</taxon>
        <taxon>Gammaproteobacteria</taxon>
        <taxon>Moraxellales</taxon>
        <taxon>Moraxellaceae</taxon>
        <taxon>Psychrobacter</taxon>
    </lineage>
</organism>
<protein>
    <recommendedName>
        <fullName evidence="1">Argininosuccinate lyase</fullName>
        <shortName evidence="1">ASAL</shortName>
        <ecNumber evidence="1">4.3.2.1</ecNumber>
    </recommendedName>
    <alternativeName>
        <fullName evidence="1">Arginosuccinase</fullName>
    </alternativeName>
</protein>
<name>ARLY_PSYCK</name>
<comment type="catalytic activity">
    <reaction evidence="1">
        <text>2-(N(omega)-L-arginino)succinate = fumarate + L-arginine</text>
        <dbReference type="Rhea" id="RHEA:24020"/>
        <dbReference type="ChEBI" id="CHEBI:29806"/>
        <dbReference type="ChEBI" id="CHEBI:32682"/>
        <dbReference type="ChEBI" id="CHEBI:57472"/>
        <dbReference type="EC" id="4.3.2.1"/>
    </reaction>
</comment>
<comment type="pathway">
    <text evidence="1">Amino-acid biosynthesis; L-arginine biosynthesis; L-arginine from L-ornithine and carbamoyl phosphate: step 3/3.</text>
</comment>
<comment type="subcellular location">
    <subcellularLocation>
        <location evidence="1">Cytoplasm</location>
    </subcellularLocation>
</comment>
<comment type="similarity">
    <text evidence="1">Belongs to the lyase 1 family. Argininosuccinate lyase subfamily.</text>
</comment>
<feature type="chain" id="PRO_0000240757" description="Argininosuccinate lyase">
    <location>
        <begin position="1"/>
        <end position="457"/>
    </location>
</feature>